<evidence type="ECO:0000255" key="1">
    <source>
        <dbReference type="HAMAP-Rule" id="MF_00107"/>
    </source>
</evidence>
<protein>
    <recommendedName>
        <fullName evidence="1">2-C-methyl-D-erythritol 2,4-cyclodiphosphate synthase</fullName>
        <shortName evidence="1">MECDP-synthase</shortName>
        <shortName evidence="1">MECPP-synthase</shortName>
        <shortName evidence="1">MECPS</shortName>
        <ecNumber evidence="1">4.6.1.12</ecNumber>
    </recommendedName>
</protein>
<dbReference type="EC" id="4.6.1.12" evidence="1"/>
<dbReference type="EMBL" id="CR555306">
    <property type="protein sequence ID" value="CAI09864.1"/>
    <property type="molecule type" value="Genomic_DNA"/>
</dbReference>
<dbReference type="RefSeq" id="WP_011239517.1">
    <property type="nucleotide sequence ID" value="NC_006513.1"/>
</dbReference>
<dbReference type="SMR" id="Q5NYK0"/>
<dbReference type="STRING" id="76114.ebA6542"/>
<dbReference type="KEGG" id="eba:ebA6542"/>
<dbReference type="eggNOG" id="COG0245">
    <property type="taxonomic scope" value="Bacteria"/>
</dbReference>
<dbReference type="HOGENOM" id="CLU_084630_2_0_4"/>
<dbReference type="OrthoDB" id="9804336at2"/>
<dbReference type="UniPathway" id="UPA00056">
    <property type="reaction ID" value="UER00095"/>
</dbReference>
<dbReference type="Proteomes" id="UP000006552">
    <property type="component" value="Chromosome"/>
</dbReference>
<dbReference type="GO" id="GO:0008685">
    <property type="term" value="F:2-C-methyl-D-erythritol 2,4-cyclodiphosphate synthase activity"/>
    <property type="evidence" value="ECO:0007669"/>
    <property type="project" value="UniProtKB-UniRule"/>
</dbReference>
<dbReference type="GO" id="GO:0046872">
    <property type="term" value="F:metal ion binding"/>
    <property type="evidence" value="ECO:0007669"/>
    <property type="project" value="UniProtKB-KW"/>
</dbReference>
<dbReference type="GO" id="GO:0019288">
    <property type="term" value="P:isopentenyl diphosphate biosynthetic process, methylerythritol 4-phosphate pathway"/>
    <property type="evidence" value="ECO:0007669"/>
    <property type="project" value="UniProtKB-UniRule"/>
</dbReference>
<dbReference type="GO" id="GO:0016114">
    <property type="term" value="P:terpenoid biosynthetic process"/>
    <property type="evidence" value="ECO:0007669"/>
    <property type="project" value="InterPro"/>
</dbReference>
<dbReference type="CDD" id="cd00554">
    <property type="entry name" value="MECDP_synthase"/>
    <property type="match status" value="1"/>
</dbReference>
<dbReference type="FunFam" id="3.30.1330.50:FF:000001">
    <property type="entry name" value="2-C-methyl-D-erythritol 2,4-cyclodiphosphate synthase"/>
    <property type="match status" value="1"/>
</dbReference>
<dbReference type="Gene3D" id="3.30.1330.50">
    <property type="entry name" value="2-C-methyl-D-erythritol 2,4-cyclodiphosphate synthase"/>
    <property type="match status" value="1"/>
</dbReference>
<dbReference type="HAMAP" id="MF_00107">
    <property type="entry name" value="IspF"/>
    <property type="match status" value="1"/>
</dbReference>
<dbReference type="InterPro" id="IPR003526">
    <property type="entry name" value="MECDP_synthase"/>
</dbReference>
<dbReference type="InterPro" id="IPR020555">
    <property type="entry name" value="MECDP_synthase_CS"/>
</dbReference>
<dbReference type="InterPro" id="IPR036571">
    <property type="entry name" value="MECDP_synthase_sf"/>
</dbReference>
<dbReference type="NCBIfam" id="TIGR00151">
    <property type="entry name" value="ispF"/>
    <property type="match status" value="1"/>
</dbReference>
<dbReference type="PANTHER" id="PTHR43181">
    <property type="entry name" value="2-C-METHYL-D-ERYTHRITOL 2,4-CYCLODIPHOSPHATE SYNTHASE, CHLOROPLASTIC"/>
    <property type="match status" value="1"/>
</dbReference>
<dbReference type="PANTHER" id="PTHR43181:SF1">
    <property type="entry name" value="2-C-METHYL-D-ERYTHRITOL 2,4-CYCLODIPHOSPHATE SYNTHASE, CHLOROPLASTIC"/>
    <property type="match status" value="1"/>
</dbReference>
<dbReference type="Pfam" id="PF02542">
    <property type="entry name" value="YgbB"/>
    <property type="match status" value="1"/>
</dbReference>
<dbReference type="SUPFAM" id="SSF69765">
    <property type="entry name" value="IpsF-like"/>
    <property type="match status" value="1"/>
</dbReference>
<dbReference type="PROSITE" id="PS01350">
    <property type="entry name" value="ISPF"/>
    <property type="match status" value="1"/>
</dbReference>
<comment type="function">
    <text evidence="1">Involved in the biosynthesis of isopentenyl diphosphate (IPP) and dimethylallyl diphosphate (DMAPP), two major building blocks of isoprenoid compounds. Catalyzes the conversion of 4-diphosphocytidyl-2-C-methyl-D-erythritol 2-phosphate (CDP-ME2P) to 2-C-methyl-D-erythritol 2,4-cyclodiphosphate (ME-CPP) with a corresponding release of cytidine 5-monophosphate (CMP).</text>
</comment>
<comment type="catalytic activity">
    <reaction evidence="1">
        <text>4-CDP-2-C-methyl-D-erythritol 2-phosphate = 2-C-methyl-D-erythritol 2,4-cyclic diphosphate + CMP</text>
        <dbReference type="Rhea" id="RHEA:23864"/>
        <dbReference type="ChEBI" id="CHEBI:57919"/>
        <dbReference type="ChEBI" id="CHEBI:58483"/>
        <dbReference type="ChEBI" id="CHEBI:60377"/>
        <dbReference type="EC" id="4.6.1.12"/>
    </reaction>
</comment>
<comment type="cofactor">
    <cofactor evidence="1">
        <name>a divalent metal cation</name>
        <dbReference type="ChEBI" id="CHEBI:60240"/>
    </cofactor>
    <text evidence="1">Binds 1 divalent metal cation per subunit.</text>
</comment>
<comment type="pathway">
    <text evidence="1">Isoprenoid biosynthesis; isopentenyl diphosphate biosynthesis via DXP pathway; isopentenyl diphosphate from 1-deoxy-D-xylulose 5-phosphate: step 4/6.</text>
</comment>
<comment type="subunit">
    <text evidence="1">Homotrimer.</text>
</comment>
<comment type="similarity">
    <text evidence="1">Belongs to the IspF family.</text>
</comment>
<name>ISPF_AROAE</name>
<keyword id="KW-0414">Isoprene biosynthesis</keyword>
<keyword id="KW-0456">Lyase</keyword>
<keyword id="KW-0479">Metal-binding</keyword>
<keyword id="KW-1185">Reference proteome</keyword>
<gene>
    <name evidence="1" type="primary">ispF</name>
    <name type="ordered locus">AZOSEA37390</name>
    <name type="ORF">ebA6542</name>
</gene>
<reference key="1">
    <citation type="journal article" date="2005" name="Arch. Microbiol.">
        <title>The genome sequence of an anaerobic aromatic-degrading denitrifying bacterium, strain EbN1.</title>
        <authorList>
            <person name="Rabus R."/>
            <person name="Kube M."/>
            <person name="Heider J."/>
            <person name="Beck A."/>
            <person name="Heitmann K."/>
            <person name="Widdel F."/>
            <person name="Reinhardt R."/>
        </authorList>
    </citation>
    <scope>NUCLEOTIDE SEQUENCE [LARGE SCALE GENOMIC DNA]</scope>
    <source>
        <strain>DSM 19018 / LMG 30748 / EbN1</strain>
    </source>
</reference>
<accession>Q5NYK0</accession>
<sequence length="165" mass="16909">MKAPFRIGQGFDVHALVPGRALIVGGVHIPFERGLLGHSDADVLLHALTDALLGAAGLGDIGRLFPDTDAAHAGADSRVLLREAFAAVRAAGFGVVNVDATVICRAPRILPHAPAMVANIAADLGIDAAAVNIKGKTTEKLGFTGRGEGIAAQVVALLMRHGDET</sequence>
<feature type="chain" id="PRO_0000237705" description="2-C-methyl-D-erythritol 2,4-cyclodiphosphate synthase">
    <location>
        <begin position="1"/>
        <end position="165"/>
    </location>
</feature>
<feature type="binding site" evidence="1">
    <location>
        <begin position="12"/>
        <end position="14"/>
    </location>
    <ligand>
        <name>4-CDP-2-C-methyl-D-erythritol 2-phosphate</name>
        <dbReference type="ChEBI" id="CHEBI:57919"/>
    </ligand>
</feature>
<feature type="binding site" evidence="1">
    <location>
        <position position="12"/>
    </location>
    <ligand>
        <name>a divalent metal cation</name>
        <dbReference type="ChEBI" id="CHEBI:60240"/>
    </ligand>
</feature>
<feature type="binding site" evidence="1">
    <location>
        <position position="14"/>
    </location>
    <ligand>
        <name>a divalent metal cation</name>
        <dbReference type="ChEBI" id="CHEBI:60240"/>
    </ligand>
</feature>
<feature type="binding site" evidence="1">
    <location>
        <begin position="38"/>
        <end position="39"/>
    </location>
    <ligand>
        <name>4-CDP-2-C-methyl-D-erythritol 2-phosphate</name>
        <dbReference type="ChEBI" id="CHEBI:57919"/>
    </ligand>
</feature>
<feature type="binding site" evidence="1">
    <location>
        <position position="46"/>
    </location>
    <ligand>
        <name>a divalent metal cation</name>
        <dbReference type="ChEBI" id="CHEBI:60240"/>
    </ligand>
</feature>
<feature type="binding site" evidence="1">
    <location>
        <begin position="60"/>
        <end position="62"/>
    </location>
    <ligand>
        <name>4-CDP-2-C-methyl-D-erythritol 2-phosphate</name>
        <dbReference type="ChEBI" id="CHEBI:57919"/>
    </ligand>
</feature>
<feature type="binding site" evidence="1">
    <location>
        <begin position="65"/>
        <end position="69"/>
    </location>
    <ligand>
        <name>4-CDP-2-C-methyl-D-erythritol 2-phosphate</name>
        <dbReference type="ChEBI" id="CHEBI:57919"/>
    </ligand>
</feature>
<feature type="binding site" evidence="1">
    <location>
        <position position="143"/>
    </location>
    <ligand>
        <name>4-CDP-2-C-methyl-D-erythritol 2-phosphate</name>
        <dbReference type="ChEBI" id="CHEBI:57919"/>
    </ligand>
</feature>
<feature type="binding site" evidence="1">
    <location>
        <position position="146"/>
    </location>
    <ligand>
        <name>4-CDP-2-C-methyl-D-erythritol 2-phosphate</name>
        <dbReference type="ChEBI" id="CHEBI:57919"/>
    </ligand>
</feature>
<feature type="site" description="Transition state stabilizer" evidence="1">
    <location>
        <position position="38"/>
    </location>
</feature>
<feature type="site" description="Transition state stabilizer" evidence="1">
    <location>
        <position position="137"/>
    </location>
</feature>
<organism>
    <name type="scientific">Aromatoleum aromaticum (strain DSM 19018 / LMG 30748 / EbN1)</name>
    <name type="common">Azoarcus sp. (strain EbN1)</name>
    <dbReference type="NCBI Taxonomy" id="76114"/>
    <lineage>
        <taxon>Bacteria</taxon>
        <taxon>Pseudomonadati</taxon>
        <taxon>Pseudomonadota</taxon>
        <taxon>Betaproteobacteria</taxon>
        <taxon>Rhodocyclales</taxon>
        <taxon>Rhodocyclaceae</taxon>
        <taxon>Aromatoleum</taxon>
    </lineage>
</organism>
<proteinExistence type="inferred from homology"/>